<organism>
    <name type="scientific">Streptococcus pneumoniae (strain Hungary19A-6)</name>
    <dbReference type="NCBI Taxonomy" id="487214"/>
    <lineage>
        <taxon>Bacteria</taxon>
        <taxon>Bacillati</taxon>
        <taxon>Bacillota</taxon>
        <taxon>Bacilli</taxon>
        <taxon>Lactobacillales</taxon>
        <taxon>Streptococcaceae</taxon>
        <taxon>Streptococcus</taxon>
    </lineage>
</organism>
<comment type="function">
    <text evidence="1">Involved in control of chromosome replication initiation. Inhibits the cooperative binding of DnaA to the oriC region, thus negatively regulating initiation of chromosome replication. Inhibits the ability of DnaA-ATP to form a helix on DNA; does not disassemble preformed DnaA-DNA helices. Decreases the residence time of DnaA on the chromosome at its binding sites (oriC, replication forks and promoter-binding sites). Tethers DnaA to the replication machinery via the DNA polymerase beta sliding clamp subunit (dnaN). Associates with oriC and other DnaA targets on the chromosome in a DnaA-dependent manner.</text>
</comment>
<comment type="cofactor">
    <cofactor evidence="1">
        <name>Zn(2+)</name>
        <dbReference type="ChEBI" id="CHEBI:29105"/>
    </cofactor>
    <text evidence="1">Binds 1 zinc ion per subunit.</text>
</comment>
<comment type="subunit">
    <text evidence="1">Homotetramer. Interacts with both DnaA and DnaN, acting as a bridge between these two proteins.</text>
</comment>
<comment type="subcellular location">
    <subcellularLocation>
        <location evidence="1">Cytoplasm</location>
        <location evidence="1">Nucleoid</location>
    </subcellularLocation>
    <text evidence="1">Localizes in tight foci, which correspond to the replisome at mid-cell throughout the cell cycle.</text>
</comment>
<comment type="similarity">
    <text evidence="1">Belongs to the YabA family.</text>
</comment>
<protein>
    <recommendedName>
        <fullName evidence="1">Replication initiation control protein YabA</fullName>
    </recommendedName>
</protein>
<feature type="chain" id="PRO_1000137837" description="Replication initiation control protein YabA">
    <location>
        <begin position="1"/>
        <end position="105"/>
    </location>
</feature>
<feature type="binding site" evidence="1">
    <location>
        <position position="79"/>
    </location>
    <ligand>
        <name>Zn(2+)</name>
        <dbReference type="ChEBI" id="CHEBI:29105"/>
    </ligand>
</feature>
<feature type="binding site" evidence="1">
    <location>
        <position position="81"/>
    </location>
    <ligand>
        <name>Zn(2+)</name>
        <dbReference type="ChEBI" id="CHEBI:29105"/>
    </ligand>
</feature>
<feature type="binding site" evidence="1">
    <location>
        <position position="95"/>
    </location>
    <ligand>
        <name>Zn(2+)</name>
        <dbReference type="ChEBI" id="CHEBI:29105"/>
    </ligand>
</feature>
<feature type="binding site" evidence="1">
    <location>
        <position position="98"/>
    </location>
    <ligand>
        <name>Zn(2+)</name>
        <dbReference type="ChEBI" id="CHEBI:29105"/>
    </ligand>
</feature>
<name>YABA_STRPI</name>
<evidence type="ECO:0000255" key="1">
    <source>
        <dbReference type="HAMAP-Rule" id="MF_01159"/>
    </source>
</evidence>
<dbReference type="EMBL" id="CP000936">
    <property type="protein sequence ID" value="ACA35843.1"/>
    <property type="molecule type" value="Genomic_DNA"/>
</dbReference>
<dbReference type="RefSeq" id="WP_000358228.1">
    <property type="nucleotide sequence ID" value="NC_010380.1"/>
</dbReference>
<dbReference type="SMR" id="B1IBA4"/>
<dbReference type="GeneID" id="93739792"/>
<dbReference type="KEGG" id="spv:SPH_1045"/>
<dbReference type="HOGENOM" id="CLU_157169_0_0_9"/>
<dbReference type="Proteomes" id="UP000002163">
    <property type="component" value="Chromosome"/>
</dbReference>
<dbReference type="GO" id="GO:0009295">
    <property type="term" value="C:nucleoid"/>
    <property type="evidence" value="ECO:0007669"/>
    <property type="project" value="UniProtKB-SubCell"/>
</dbReference>
<dbReference type="GO" id="GO:0006260">
    <property type="term" value="P:DNA replication"/>
    <property type="evidence" value="ECO:0007669"/>
    <property type="project" value="UniProtKB-UniRule"/>
</dbReference>
<dbReference type="HAMAP" id="MF_01159">
    <property type="entry name" value="YabA"/>
    <property type="match status" value="1"/>
</dbReference>
<dbReference type="InterPro" id="IPR010377">
    <property type="entry name" value="YabA"/>
</dbReference>
<dbReference type="NCBIfam" id="NF009640">
    <property type="entry name" value="PRK13169.1-1"/>
    <property type="match status" value="1"/>
</dbReference>
<dbReference type="Pfam" id="PF06156">
    <property type="entry name" value="YabA"/>
    <property type="match status" value="1"/>
</dbReference>
<dbReference type="PIRSF" id="PIRSF021439">
    <property type="entry name" value="DUF972"/>
    <property type="match status" value="1"/>
</dbReference>
<gene>
    <name evidence="1" type="primary">yabA</name>
    <name type="ordered locus">SPH_1045</name>
</gene>
<accession>B1IBA4</accession>
<reference key="1">
    <citation type="journal article" date="2010" name="Genome Biol.">
        <title>Structure and dynamics of the pan-genome of Streptococcus pneumoniae and closely related species.</title>
        <authorList>
            <person name="Donati C."/>
            <person name="Hiller N.L."/>
            <person name="Tettelin H."/>
            <person name="Muzzi A."/>
            <person name="Croucher N.J."/>
            <person name="Angiuoli S.V."/>
            <person name="Oggioni M."/>
            <person name="Dunning Hotopp J.C."/>
            <person name="Hu F.Z."/>
            <person name="Riley D.R."/>
            <person name="Covacci A."/>
            <person name="Mitchell T.J."/>
            <person name="Bentley S.D."/>
            <person name="Kilian M."/>
            <person name="Ehrlich G.D."/>
            <person name="Rappuoli R."/>
            <person name="Moxon E.R."/>
            <person name="Masignani V."/>
        </authorList>
    </citation>
    <scope>NUCLEOTIDE SEQUENCE [LARGE SCALE GENOMIC DNA]</scope>
    <source>
        <strain>Hungary19A-6</strain>
    </source>
</reference>
<sequence>MDKKELFDALDDFSQQLLVTLADVEAIKKNLKSLVEENTALRLENSKLRERLGEVEADAPVKAKHVRESVRRIYRDGFHVCNDFYGQRREQDEECMFCDELLYRE</sequence>
<proteinExistence type="inferred from homology"/>
<keyword id="KW-0963">Cytoplasm</keyword>
<keyword id="KW-0235">DNA replication</keyword>
<keyword id="KW-0236">DNA replication inhibitor</keyword>
<keyword id="KW-0479">Metal-binding</keyword>
<keyword id="KW-0862">Zinc</keyword>